<gene>
    <name type="ORF">C3</name>
    <name type="ORF">L3</name>
</gene>
<organismHost>
    <name type="scientific">Nicotiana tabacum</name>
    <name type="common">Common tobacco</name>
    <dbReference type="NCBI Taxonomy" id="4097"/>
</organismHost>
<organismHost>
    <name type="scientific">Sigesbeckia orientalis</name>
    <dbReference type="NCBI Taxonomy" id="185191"/>
</organismHost>
<organismHost>
    <name type="scientific">Solanum lycopersicum</name>
    <name type="common">Tomato</name>
    <name type="synonym">Lycopersicon esculentum</name>
    <dbReference type="NCBI Taxonomy" id="4081"/>
</organismHost>
<evidence type="ECO:0000250" key="1"/>
<evidence type="ECO:0000305" key="2"/>
<accession>Q9DXE7</accession>
<name>REN_TYLCC</name>
<sequence length="134" mass="15969">MDSRTGELLTAAQSENGVYIWTVKNPLYFKITKHHERPFLRNHDIITIQVQFNYNLRKALGIHKCFLTCQIWTRLHPQTSHFLRVFKYQFIKYLDRLGVISINNCIRAFSHVLYDVLNGTIDVIEKHDIKFNIY</sequence>
<protein>
    <recommendedName>
        <fullName>Replication enhancer protein</fullName>
        <shortName>REn</shortName>
    </recommendedName>
    <alternativeName>
        <fullName>Protein C3</fullName>
    </alternativeName>
    <alternativeName>
        <fullName>Protein L3</fullName>
    </alternativeName>
</protein>
<keyword id="KW-0945">Host-virus interaction</keyword>
<keyword id="KW-1185">Reference proteome</keyword>
<proteinExistence type="inferred from homology"/>
<reference key="1">
    <citation type="journal article" date="2001" name="Virus Res.">
        <title>Tomato yellow leaf curl China virus: monopartite genome organization and agroinfection of plants.</title>
        <authorList>
            <person name="Yin Q."/>
            <person name="Yang H."/>
            <person name="Gong Q."/>
            <person name="Wang H."/>
            <person name="Liu Y."/>
            <person name="Hong Y."/>
            <person name="Tien P."/>
        </authorList>
    </citation>
    <scope>NUCLEOTIDE SEQUENCE [GENOMIC DNA]</scope>
    <source>
        <strain>Isolate CHI</strain>
    </source>
</reference>
<organism>
    <name type="scientific">Tomato yellow leaf curl China virus</name>
    <name type="common">TYLCCNV</name>
    <dbReference type="NCBI Taxonomy" id="185793"/>
    <lineage>
        <taxon>Viruses</taxon>
        <taxon>Monodnaviria</taxon>
        <taxon>Shotokuvirae</taxon>
        <taxon>Cressdnaviricota</taxon>
        <taxon>Repensiviricetes</taxon>
        <taxon>Geplafuvirales</taxon>
        <taxon>Geminiviridae</taxon>
        <taxon>Begomovirus</taxon>
    </lineage>
</organism>
<feature type="chain" id="PRO_0000312154" description="Replication enhancer protein">
    <location>
        <begin position="1"/>
        <end position="134"/>
    </location>
</feature>
<comment type="function">
    <text evidence="1">Increases viral DNA accumulation. Enhances infectivity and symptom expression (By similarity).</text>
</comment>
<comment type="subunit">
    <text evidence="1">Homooligomer. Interacts with the replication-associated protein (REP). Interacts with host proliferating cell nuclear antigen (PCNA). Interacts with host retinoblastoma-related protein 1 (RBR1), and may thereby deregulate the host cell cycle. Oligomerization and interaction with PCNA are necessary for optimal replication enhancement (By similarity).</text>
</comment>
<comment type="similarity">
    <text evidence="2">Belongs to the geminiviridae replication enhancer protein family.</text>
</comment>
<dbReference type="EMBL" id="AF311734">
    <property type="protein sequence ID" value="AAG27473.1"/>
    <property type="molecule type" value="Genomic_DNA"/>
</dbReference>
<dbReference type="KEGG" id="vg:949224"/>
<dbReference type="OrthoDB" id="13855at10239"/>
<dbReference type="Proteomes" id="UP000008267">
    <property type="component" value="Genome"/>
</dbReference>
<dbReference type="GO" id="GO:0016032">
    <property type="term" value="P:viral process"/>
    <property type="evidence" value="ECO:0007669"/>
    <property type="project" value="InterPro"/>
</dbReference>
<dbReference type="InterPro" id="IPR000657">
    <property type="entry name" value="Gemini_AL3"/>
</dbReference>
<dbReference type="Pfam" id="PF01407">
    <property type="entry name" value="Gemini_AL3"/>
    <property type="match status" value="1"/>
</dbReference>
<dbReference type="PRINTS" id="PR00231">
    <property type="entry name" value="GEMCOATAL3"/>
</dbReference>